<protein>
    <recommendedName>
        <fullName evidence="1">Aspartate--tRNA ligase</fullName>
        <ecNumber evidence="1">6.1.1.12</ecNumber>
    </recommendedName>
    <alternativeName>
        <fullName evidence="1">Aspartyl-tRNA synthetase</fullName>
        <shortName evidence="1">AspRS</shortName>
    </alternativeName>
</protein>
<reference key="1">
    <citation type="journal article" date="2005" name="J. Bacteriol.">
        <title>Genomic sequence of an otitis media isolate of nontypeable Haemophilus influenzae: comparative study with H. influenzae serotype d, strain KW20.</title>
        <authorList>
            <person name="Harrison A."/>
            <person name="Dyer D.W."/>
            <person name="Gillaspy A."/>
            <person name="Ray W.C."/>
            <person name="Mungur R."/>
            <person name="Carson M.B."/>
            <person name="Zhong H."/>
            <person name="Gipson J."/>
            <person name="Gipson M."/>
            <person name="Johnson L.S."/>
            <person name="Lewis L."/>
            <person name="Bakaletz L.O."/>
            <person name="Munson R.S. Jr."/>
        </authorList>
    </citation>
    <scope>NUCLEOTIDE SEQUENCE [LARGE SCALE GENOMIC DNA]</scope>
    <source>
        <strain>86-028NP</strain>
    </source>
</reference>
<comment type="function">
    <text evidence="1">Catalyzes the attachment of L-aspartate to tRNA(Asp) in a two-step reaction: L-aspartate is first activated by ATP to form Asp-AMP and then transferred to the acceptor end of tRNA(Asp).</text>
</comment>
<comment type="catalytic activity">
    <reaction evidence="1">
        <text>tRNA(Asp) + L-aspartate + ATP = L-aspartyl-tRNA(Asp) + AMP + diphosphate</text>
        <dbReference type="Rhea" id="RHEA:19649"/>
        <dbReference type="Rhea" id="RHEA-COMP:9660"/>
        <dbReference type="Rhea" id="RHEA-COMP:9678"/>
        <dbReference type="ChEBI" id="CHEBI:29991"/>
        <dbReference type="ChEBI" id="CHEBI:30616"/>
        <dbReference type="ChEBI" id="CHEBI:33019"/>
        <dbReference type="ChEBI" id="CHEBI:78442"/>
        <dbReference type="ChEBI" id="CHEBI:78516"/>
        <dbReference type="ChEBI" id="CHEBI:456215"/>
        <dbReference type="EC" id="6.1.1.12"/>
    </reaction>
</comment>
<comment type="subunit">
    <text evidence="1">Homodimer.</text>
</comment>
<comment type="subcellular location">
    <subcellularLocation>
        <location evidence="1">Cytoplasm</location>
    </subcellularLocation>
</comment>
<comment type="similarity">
    <text evidence="1">Belongs to the class-II aminoacyl-tRNA synthetase family. Type 1 subfamily.</text>
</comment>
<sequence>MMRTHYCGALNRNNIGQDVTLSGWVHRRRDLGGLIFIDMRDRDGIVQVCFDPKYQDALTAAAGLRNEFCIQIKGEVIARPENQINKNMATGEVEVLAKELRIYNASDVLPLDFNQNNTEEQRLKYRYLDLRRPEMAQRLKTRAKITSFVRRFMDDNGFLDIETPMLTKATPEGARDYLVPSRVHKGKFYALPQSPQLFKQLLMMSGFDRYYQIVKCFRDEDLRADRQPEFTQIDVETSFLTAPEVREIMERMVHDLWLDTIGVDLGKFPVMTWQEAMRRFGSDKPDLRNPLEMVDVADIVKDVEFKVFNEPANNPNGRVAVIRVPNGAEITRKQIDEYTQFVGIYGAKGLAWAKVNDINAGLEGVQSPIAKFLNEEVWKALAERVNAQTGDILFFGADKWQTTTDAMGALRLKLGCDLGLTRLDEWQPLWVIDFPMFERDEEGNLAAMHHPFTSPKDFSPEQLEADPTSAVANAYDMVINGYEVGGGSVRIFDPKMQQTVFRILGIDEEQQREKFGFLLDALKFGTPPHAGLAFGLDRLTMLLTGTENIRDVIAFPKTTAAACLMTEAPSFVNPQALEELAISVVKAE</sequence>
<feature type="chain" id="PRO_0000110881" description="Aspartate--tRNA ligase">
    <location>
        <begin position="1"/>
        <end position="588"/>
    </location>
</feature>
<feature type="region of interest" description="Aspartate" evidence="1">
    <location>
        <begin position="196"/>
        <end position="199"/>
    </location>
</feature>
<feature type="binding site" evidence="1">
    <location>
        <position position="172"/>
    </location>
    <ligand>
        <name>L-aspartate</name>
        <dbReference type="ChEBI" id="CHEBI:29991"/>
    </ligand>
</feature>
<feature type="binding site" evidence="1">
    <location>
        <begin position="218"/>
        <end position="220"/>
    </location>
    <ligand>
        <name>ATP</name>
        <dbReference type="ChEBI" id="CHEBI:30616"/>
    </ligand>
</feature>
<feature type="binding site" evidence="1">
    <location>
        <position position="218"/>
    </location>
    <ligand>
        <name>L-aspartate</name>
        <dbReference type="ChEBI" id="CHEBI:29991"/>
    </ligand>
</feature>
<feature type="binding site" evidence="1">
    <location>
        <position position="227"/>
    </location>
    <ligand>
        <name>ATP</name>
        <dbReference type="ChEBI" id="CHEBI:30616"/>
    </ligand>
</feature>
<feature type="binding site" evidence="1">
    <location>
        <position position="449"/>
    </location>
    <ligand>
        <name>L-aspartate</name>
        <dbReference type="ChEBI" id="CHEBI:29991"/>
    </ligand>
</feature>
<feature type="binding site" evidence="1">
    <location>
        <position position="483"/>
    </location>
    <ligand>
        <name>ATP</name>
        <dbReference type="ChEBI" id="CHEBI:30616"/>
    </ligand>
</feature>
<feature type="binding site" evidence="1">
    <location>
        <position position="490"/>
    </location>
    <ligand>
        <name>L-aspartate</name>
        <dbReference type="ChEBI" id="CHEBI:29991"/>
    </ligand>
</feature>
<feature type="binding site" evidence="1">
    <location>
        <begin position="535"/>
        <end position="538"/>
    </location>
    <ligand>
        <name>ATP</name>
        <dbReference type="ChEBI" id="CHEBI:30616"/>
    </ligand>
</feature>
<keyword id="KW-0030">Aminoacyl-tRNA synthetase</keyword>
<keyword id="KW-0067">ATP-binding</keyword>
<keyword id="KW-0963">Cytoplasm</keyword>
<keyword id="KW-0436">Ligase</keyword>
<keyword id="KW-0547">Nucleotide-binding</keyword>
<keyword id="KW-0648">Protein biosynthesis</keyword>
<gene>
    <name evidence="1" type="primary">aspS</name>
    <name type="ordered locus">NTHI0435</name>
</gene>
<evidence type="ECO:0000255" key="1">
    <source>
        <dbReference type="HAMAP-Rule" id="MF_00044"/>
    </source>
</evidence>
<name>SYD_HAEI8</name>
<proteinExistence type="inferred from homology"/>
<dbReference type="EC" id="6.1.1.12" evidence="1"/>
<dbReference type="EMBL" id="CP000057">
    <property type="protein sequence ID" value="AAX87376.1"/>
    <property type="molecule type" value="Genomic_DNA"/>
</dbReference>
<dbReference type="RefSeq" id="WP_011271986.1">
    <property type="nucleotide sequence ID" value="NC_007146.2"/>
</dbReference>
<dbReference type="SMR" id="Q4QNM1"/>
<dbReference type="GeneID" id="93219267"/>
<dbReference type="KEGG" id="hit:NTHI0435"/>
<dbReference type="HOGENOM" id="CLU_014330_3_2_6"/>
<dbReference type="Proteomes" id="UP000002525">
    <property type="component" value="Chromosome"/>
</dbReference>
<dbReference type="GO" id="GO:0005737">
    <property type="term" value="C:cytoplasm"/>
    <property type="evidence" value="ECO:0007669"/>
    <property type="project" value="UniProtKB-SubCell"/>
</dbReference>
<dbReference type="GO" id="GO:0004815">
    <property type="term" value="F:aspartate-tRNA ligase activity"/>
    <property type="evidence" value="ECO:0007669"/>
    <property type="project" value="UniProtKB-UniRule"/>
</dbReference>
<dbReference type="GO" id="GO:0005524">
    <property type="term" value="F:ATP binding"/>
    <property type="evidence" value="ECO:0007669"/>
    <property type="project" value="UniProtKB-UniRule"/>
</dbReference>
<dbReference type="GO" id="GO:0003676">
    <property type="term" value="F:nucleic acid binding"/>
    <property type="evidence" value="ECO:0007669"/>
    <property type="project" value="InterPro"/>
</dbReference>
<dbReference type="GO" id="GO:0006422">
    <property type="term" value="P:aspartyl-tRNA aminoacylation"/>
    <property type="evidence" value="ECO:0007669"/>
    <property type="project" value="UniProtKB-UniRule"/>
</dbReference>
<dbReference type="CDD" id="cd00777">
    <property type="entry name" value="AspRS_core"/>
    <property type="match status" value="1"/>
</dbReference>
<dbReference type="CDD" id="cd04317">
    <property type="entry name" value="EcAspRS_like_N"/>
    <property type="match status" value="1"/>
</dbReference>
<dbReference type="FunFam" id="2.40.50.140:FF:000080">
    <property type="entry name" value="Aspartate--tRNA ligase"/>
    <property type="match status" value="1"/>
</dbReference>
<dbReference type="Gene3D" id="3.30.930.10">
    <property type="entry name" value="Bira Bifunctional Protein, Domain 2"/>
    <property type="match status" value="1"/>
</dbReference>
<dbReference type="Gene3D" id="3.30.1360.30">
    <property type="entry name" value="GAD-like domain"/>
    <property type="match status" value="1"/>
</dbReference>
<dbReference type="Gene3D" id="2.40.50.140">
    <property type="entry name" value="Nucleic acid-binding proteins"/>
    <property type="match status" value="1"/>
</dbReference>
<dbReference type="HAMAP" id="MF_00044">
    <property type="entry name" value="Asp_tRNA_synth_type1"/>
    <property type="match status" value="1"/>
</dbReference>
<dbReference type="InterPro" id="IPR004364">
    <property type="entry name" value="Aa-tRNA-synt_II"/>
</dbReference>
<dbReference type="InterPro" id="IPR006195">
    <property type="entry name" value="aa-tRNA-synth_II"/>
</dbReference>
<dbReference type="InterPro" id="IPR045864">
    <property type="entry name" value="aa-tRNA-synth_II/BPL/LPL"/>
</dbReference>
<dbReference type="InterPro" id="IPR004524">
    <property type="entry name" value="Asp-tRNA-ligase_1"/>
</dbReference>
<dbReference type="InterPro" id="IPR047089">
    <property type="entry name" value="Asp-tRNA-ligase_1_N"/>
</dbReference>
<dbReference type="InterPro" id="IPR002312">
    <property type="entry name" value="Asp/Asn-tRNA-synth_IIb"/>
</dbReference>
<dbReference type="InterPro" id="IPR047090">
    <property type="entry name" value="AspRS_core"/>
</dbReference>
<dbReference type="InterPro" id="IPR004115">
    <property type="entry name" value="GAD-like_sf"/>
</dbReference>
<dbReference type="InterPro" id="IPR029351">
    <property type="entry name" value="GAD_dom"/>
</dbReference>
<dbReference type="InterPro" id="IPR012340">
    <property type="entry name" value="NA-bd_OB-fold"/>
</dbReference>
<dbReference type="InterPro" id="IPR004365">
    <property type="entry name" value="NA-bd_OB_tRNA"/>
</dbReference>
<dbReference type="NCBIfam" id="TIGR00459">
    <property type="entry name" value="aspS_bact"/>
    <property type="match status" value="1"/>
</dbReference>
<dbReference type="NCBIfam" id="NF001750">
    <property type="entry name" value="PRK00476.1"/>
    <property type="match status" value="1"/>
</dbReference>
<dbReference type="PANTHER" id="PTHR22594:SF5">
    <property type="entry name" value="ASPARTATE--TRNA LIGASE, MITOCHONDRIAL"/>
    <property type="match status" value="1"/>
</dbReference>
<dbReference type="PANTHER" id="PTHR22594">
    <property type="entry name" value="ASPARTYL/LYSYL-TRNA SYNTHETASE"/>
    <property type="match status" value="1"/>
</dbReference>
<dbReference type="Pfam" id="PF02938">
    <property type="entry name" value="GAD"/>
    <property type="match status" value="1"/>
</dbReference>
<dbReference type="Pfam" id="PF00152">
    <property type="entry name" value="tRNA-synt_2"/>
    <property type="match status" value="1"/>
</dbReference>
<dbReference type="Pfam" id="PF01336">
    <property type="entry name" value="tRNA_anti-codon"/>
    <property type="match status" value="1"/>
</dbReference>
<dbReference type="PRINTS" id="PR01042">
    <property type="entry name" value="TRNASYNTHASP"/>
</dbReference>
<dbReference type="SUPFAM" id="SSF55681">
    <property type="entry name" value="Class II aaRS and biotin synthetases"/>
    <property type="match status" value="1"/>
</dbReference>
<dbReference type="SUPFAM" id="SSF55261">
    <property type="entry name" value="GAD domain-like"/>
    <property type="match status" value="1"/>
</dbReference>
<dbReference type="SUPFAM" id="SSF50249">
    <property type="entry name" value="Nucleic acid-binding proteins"/>
    <property type="match status" value="1"/>
</dbReference>
<dbReference type="PROSITE" id="PS50862">
    <property type="entry name" value="AA_TRNA_LIGASE_II"/>
    <property type="match status" value="1"/>
</dbReference>
<organism>
    <name type="scientific">Haemophilus influenzae (strain 86-028NP)</name>
    <dbReference type="NCBI Taxonomy" id="281310"/>
    <lineage>
        <taxon>Bacteria</taxon>
        <taxon>Pseudomonadati</taxon>
        <taxon>Pseudomonadota</taxon>
        <taxon>Gammaproteobacteria</taxon>
        <taxon>Pasteurellales</taxon>
        <taxon>Pasteurellaceae</taxon>
        <taxon>Haemophilus</taxon>
    </lineage>
</organism>
<accession>Q4QNM1</accession>